<proteinExistence type="inferred from homology"/>
<name>ACCA_FRATW</name>
<comment type="function">
    <text evidence="1">Component of the acetyl coenzyme A carboxylase (ACC) complex. First, biotin carboxylase catalyzes the carboxylation of biotin on its carrier protein (BCCP) and then the CO(2) group is transferred by the carboxyltransferase to acetyl-CoA to form malonyl-CoA.</text>
</comment>
<comment type="catalytic activity">
    <reaction evidence="1">
        <text>N(6)-carboxybiotinyl-L-lysyl-[protein] + acetyl-CoA = N(6)-biotinyl-L-lysyl-[protein] + malonyl-CoA</text>
        <dbReference type="Rhea" id="RHEA:54728"/>
        <dbReference type="Rhea" id="RHEA-COMP:10505"/>
        <dbReference type="Rhea" id="RHEA-COMP:10506"/>
        <dbReference type="ChEBI" id="CHEBI:57288"/>
        <dbReference type="ChEBI" id="CHEBI:57384"/>
        <dbReference type="ChEBI" id="CHEBI:83144"/>
        <dbReference type="ChEBI" id="CHEBI:83145"/>
        <dbReference type="EC" id="2.1.3.15"/>
    </reaction>
</comment>
<comment type="pathway">
    <text evidence="1">Lipid metabolism; malonyl-CoA biosynthesis; malonyl-CoA from acetyl-CoA: step 1/1.</text>
</comment>
<comment type="subunit">
    <text evidence="1">Acetyl-CoA carboxylase is a heterohexamer composed of biotin carboxyl carrier protein (AccB), biotin carboxylase (AccC) and two subunits each of ACCase subunit alpha (AccA) and ACCase subunit beta (AccD).</text>
</comment>
<comment type="subcellular location">
    <subcellularLocation>
        <location evidence="1">Cytoplasm</location>
    </subcellularLocation>
</comment>
<comment type="similarity">
    <text evidence="1">Belongs to the AccA family.</text>
</comment>
<dbReference type="EC" id="2.1.3.15" evidence="1"/>
<dbReference type="EMBL" id="CP000608">
    <property type="protein sequence ID" value="ABO46665.1"/>
    <property type="molecule type" value="Genomic_DNA"/>
</dbReference>
<dbReference type="RefSeq" id="WP_003018337.1">
    <property type="nucleotide sequence ID" value="NC_009257.1"/>
</dbReference>
<dbReference type="SMR" id="A4IXL3"/>
<dbReference type="KEGG" id="ftw:FTW_0793"/>
<dbReference type="HOGENOM" id="CLU_015486_0_2_6"/>
<dbReference type="UniPathway" id="UPA00655">
    <property type="reaction ID" value="UER00711"/>
</dbReference>
<dbReference type="GO" id="GO:0009317">
    <property type="term" value="C:acetyl-CoA carboxylase complex"/>
    <property type="evidence" value="ECO:0007669"/>
    <property type="project" value="InterPro"/>
</dbReference>
<dbReference type="GO" id="GO:0003989">
    <property type="term" value="F:acetyl-CoA carboxylase activity"/>
    <property type="evidence" value="ECO:0007669"/>
    <property type="project" value="InterPro"/>
</dbReference>
<dbReference type="GO" id="GO:0005524">
    <property type="term" value="F:ATP binding"/>
    <property type="evidence" value="ECO:0007669"/>
    <property type="project" value="UniProtKB-KW"/>
</dbReference>
<dbReference type="GO" id="GO:0016743">
    <property type="term" value="F:carboxyl- or carbamoyltransferase activity"/>
    <property type="evidence" value="ECO:0007669"/>
    <property type="project" value="UniProtKB-UniRule"/>
</dbReference>
<dbReference type="GO" id="GO:0006633">
    <property type="term" value="P:fatty acid biosynthetic process"/>
    <property type="evidence" value="ECO:0007669"/>
    <property type="project" value="UniProtKB-KW"/>
</dbReference>
<dbReference type="GO" id="GO:2001295">
    <property type="term" value="P:malonyl-CoA biosynthetic process"/>
    <property type="evidence" value="ECO:0007669"/>
    <property type="project" value="UniProtKB-UniRule"/>
</dbReference>
<dbReference type="Gene3D" id="3.90.226.10">
    <property type="entry name" value="2-enoyl-CoA Hydratase, Chain A, domain 1"/>
    <property type="match status" value="1"/>
</dbReference>
<dbReference type="HAMAP" id="MF_00823">
    <property type="entry name" value="AcetylCoA_CT_alpha"/>
    <property type="match status" value="1"/>
</dbReference>
<dbReference type="InterPro" id="IPR001095">
    <property type="entry name" value="Acetyl_CoA_COase_a_su"/>
</dbReference>
<dbReference type="InterPro" id="IPR029045">
    <property type="entry name" value="ClpP/crotonase-like_dom_sf"/>
</dbReference>
<dbReference type="InterPro" id="IPR011763">
    <property type="entry name" value="COA_CT_C"/>
</dbReference>
<dbReference type="NCBIfam" id="TIGR00513">
    <property type="entry name" value="accA"/>
    <property type="match status" value="1"/>
</dbReference>
<dbReference type="NCBIfam" id="NF041504">
    <property type="entry name" value="AccA_sub"/>
    <property type="match status" value="1"/>
</dbReference>
<dbReference type="NCBIfam" id="NF004344">
    <property type="entry name" value="PRK05724.1"/>
    <property type="match status" value="1"/>
</dbReference>
<dbReference type="PANTHER" id="PTHR42853">
    <property type="entry name" value="ACETYL-COENZYME A CARBOXYLASE CARBOXYL TRANSFERASE SUBUNIT ALPHA"/>
    <property type="match status" value="1"/>
</dbReference>
<dbReference type="PANTHER" id="PTHR42853:SF3">
    <property type="entry name" value="ACETYL-COENZYME A CARBOXYLASE CARBOXYL TRANSFERASE SUBUNIT ALPHA, CHLOROPLASTIC"/>
    <property type="match status" value="1"/>
</dbReference>
<dbReference type="Pfam" id="PF03255">
    <property type="entry name" value="ACCA"/>
    <property type="match status" value="1"/>
</dbReference>
<dbReference type="PRINTS" id="PR01069">
    <property type="entry name" value="ACCCTRFRASEA"/>
</dbReference>
<dbReference type="SUPFAM" id="SSF52096">
    <property type="entry name" value="ClpP/crotonase"/>
    <property type="match status" value="1"/>
</dbReference>
<dbReference type="PROSITE" id="PS50989">
    <property type="entry name" value="COA_CT_CTER"/>
    <property type="match status" value="1"/>
</dbReference>
<organism>
    <name type="scientific">Francisella tularensis subsp. tularensis (strain WY96-3418)</name>
    <dbReference type="NCBI Taxonomy" id="418136"/>
    <lineage>
        <taxon>Bacteria</taxon>
        <taxon>Pseudomonadati</taxon>
        <taxon>Pseudomonadota</taxon>
        <taxon>Gammaproteobacteria</taxon>
        <taxon>Thiotrichales</taxon>
        <taxon>Francisellaceae</taxon>
        <taxon>Francisella</taxon>
    </lineage>
</organism>
<protein>
    <recommendedName>
        <fullName evidence="1">Acetyl-coenzyme A carboxylase carboxyl transferase subunit alpha</fullName>
        <shortName evidence="1">ACCase subunit alpha</shortName>
        <shortName evidence="1">Acetyl-CoA carboxylase carboxyltransferase subunit alpha</shortName>
        <ecNumber evidence="1">2.1.3.15</ecNumber>
    </recommendedName>
</protein>
<reference key="1">
    <citation type="journal article" date="2007" name="PLoS ONE">
        <title>Complete genomic characterization of a pathogenic A.II strain of Francisella tularensis subspecies tularensis.</title>
        <authorList>
            <person name="Beckstrom-Sternberg S.M."/>
            <person name="Auerbach R.K."/>
            <person name="Godbole S."/>
            <person name="Pearson J.V."/>
            <person name="Beckstrom-Sternberg J.S."/>
            <person name="Deng Z."/>
            <person name="Munk C."/>
            <person name="Kubota K."/>
            <person name="Zhou Y."/>
            <person name="Bruce D."/>
            <person name="Noronha J."/>
            <person name="Scheuermann R.H."/>
            <person name="Wang A."/>
            <person name="Wei X."/>
            <person name="Wang J."/>
            <person name="Hao J."/>
            <person name="Wagner D.M."/>
            <person name="Brettin T.S."/>
            <person name="Brown N."/>
            <person name="Gilna P."/>
            <person name="Keim P.S."/>
        </authorList>
    </citation>
    <scope>NUCLEOTIDE SEQUENCE [LARGE SCALE GENOMIC DNA]</scope>
    <source>
        <strain>WY96-3418</strain>
    </source>
</reference>
<keyword id="KW-0067">ATP-binding</keyword>
<keyword id="KW-0963">Cytoplasm</keyword>
<keyword id="KW-0275">Fatty acid biosynthesis</keyword>
<keyword id="KW-0276">Fatty acid metabolism</keyword>
<keyword id="KW-0444">Lipid biosynthesis</keyword>
<keyword id="KW-0443">Lipid metabolism</keyword>
<keyword id="KW-0547">Nucleotide-binding</keyword>
<keyword id="KW-0808">Transferase</keyword>
<evidence type="ECO:0000255" key="1">
    <source>
        <dbReference type="HAMAP-Rule" id="MF_00823"/>
    </source>
</evidence>
<evidence type="ECO:0000255" key="2">
    <source>
        <dbReference type="PROSITE-ProRule" id="PRU01137"/>
    </source>
</evidence>
<gene>
    <name evidence="1" type="primary">accA</name>
    <name type="ordered locus">FTW_0793</name>
</gene>
<accession>A4IXL3</accession>
<sequence length="315" mass="35436">MNYLDFESKIKEIEDKITSLSHVFEDEKTEAEIKKLSKKRLELMESTYSKLTDWQVVQLSRHPDRPYFKDLLPLIFTDFQELHGDRTFGDDLAVIGGLAKLNNKPVMVIGQEKGRDTKSKIKHNFGMMHPEGYRKALRLMKLAEKFNMPVVTFIDTPGAYPGIKAEERGQSEAIARNLLEMSALKVPVVCIVIGEGCSGGALGIGVGDRLLMLQYSYFATISPEGCASILHKTAEKASEVTQMMNITSGRLKELKIVDEVIPEPLGGAHRDYETTATNIRKAVAAELKILSEMTVEQRNSRRYDKLMSFGRFKEA</sequence>
<feature type="chain" id="PRO_1000062624" description="Acetyl-coenzyme A carboxylase carboxyl transferase subunit alpha">
    <location>
        <begin position="1"/>
        <end position="315"/>
    </location>
</feature>
<feature type="domain" description="CoA carboxyltransferase C-terminal" evidence="2">
    <location>
        <begin position="36"/>
        <end position="289"/>
    </location>
</feature>